<evidence type="ECO:0000256" key="1">
    <source>
        <dbReference type="SAM" id="MobiDB-lite"/>
    </source>
</evidence>
<keyword id="KW-1185">Reference proteome</keyword>
<protein>
    <recommendedName>
        <fullName>Uncharacterized protein Mb0968c</fullName>
    </recommendedName>
</protein>
<accession>P64766</accession>
<accession>A0A1R3XWW5</accession>
<accession>P71566</accession>
<accession>X2BG95</accession>
<proteinExistence type="predicted"/>
<organism>
    <name type="scientific">Mycobacterium bovis (strain ATCC BAA-935 / AF2122/97)</name>
    <dbReference type="NCBI Taxonomy" id="233413"/>
    <lineage>
        <taxon>Bacteria</taxon>
        <taxon>Bacillati</taxon>
        <taxon>Actinomycetota</taxon>
        <taxon>Actinomycetes</taxon>
        <taxon>Mycobacteriales</taxon>
        <taxon>Mycobacteriaceae</taxon>
        <taxon>Mycobacterium</taxon>
        <taxon>Mycobacterium tuberculosis complex</taxon>
    </lineage>
</organism>
<reference key="1">
    <citation type="journal article" date="2003" name="Proc. Natl. Acad. Sci. U.S.A.">
        <title>The complete genome sequence of Mycobacterium bovis.</title>
        <authorList>
            <person name="Garnier T."/>
            <person name="Eiglmeier K."/>
            <person name="Camus J.-C."/>
            <person name="Medina N."/>
            <person name="Mansoor H."/>
            <person name="Pryor M."/>
            <person name="Duthoy S."/>
            <person name="Grondin S."/>
            <person name="Lacroix C."/>
            <person name="Monsempe C."/>
            <person name="Simon S."/>
            <person name="Harris B."/>
            <person name="Atkin R."/>
            <person name="Doggett J."/>
            <person name="Mayes R."/>
            <person name="Keating L."/>
            <person name="Wheeler P.R."/>
            <person name="Parkhill J."/>
            <person name="Barrell B.G."/>
            <person name="Cole S.T."/>
            <person name="Gordon S.V."/>
            <person name="Hewinson R.G."/>
        </authorList>
    </citation>
    <scope>NUCLEOTIDE SEQUENCE [LARGE SCALE GENOMIC DNA]</scope>
    <source>
        <strain>ATCC BAA-935 / AF2122/97</strain>
    </source>
</reference>
<reference key="2">
    <citation type="journal article" date="2017" name="Genome Announc.">
        <title>Updated reference genome sequence and annotation of Mycobacterium bovis AF2122/97.</title>
        <authorList>
            <person name="Malone K.M."/>
            <person name="Farrell D."/>
            <person name="Stuber T.P."/>
            <person name="Schubert O.T."/>
            <person name="Aebersold R."/>
            <person name="Robbe-Austerman S."/>
            <person name="Gordon S.V."/>
        </authorList>
    </citation>
    <scope>NUCLEOTIDE SEQUENCE [LARGE SCALE GENOMIC DNA]</scope>
    <scope>GENOME REANNOTATION</scope>
    <source>
        <strain>ATCC BAA-935 / AF2122/97</strain>
    </source>
</reference>
<dbReference type="EMBL" id="LT708304">
    <property type="protein sequence ID" value="SIT99566.1"/>
    <property type="molecule type" value="Genomic_DNA"/>
</dbReference>
<dbReference type="RefSeq" id="NP_854625.1">
    <property type="nucleotide sequence ID" value="NC_002945.3"/>
</dbReference>
<dbReference type="RefSeq" id="WP_003898656.1">
    <property type="nucleotide sequence ID" value="NC_002945.4"/>
</dbReference>
<dbReference type="SMR" id="P64766"/>
<dbReference type="KEGG" id="mbo:BQ2027_MB0968C"/>
<dbReference type="PATRIC" id="fig|233413.5.peg.1053"/>
<dbReference type="Proteomes" id="UP000001419">
    <property type="component" value="Chromosome"/>
</dbReference>
<dbReference type="Gene3D" id="3.50.50.60">
    <property type="entry name" value="FAD/NAD(P)-binding domain"/>
    <property type="match status" value="1"/>
</dbReference>
<dbReference type="InterPro" id="IPR032371">
    <property type="entry name" value="DUF4873"/>
</dbReference>
<dbReference type="InterPro" id="IPR051209">
    <property type="entry name" value="FAD-bind_Monooxygenase_sf"/>
</dbReference>
<dbReference type="InterPro" id="IPR036188">
    <property type="entry name" value="FAD/NAD-bd_sf"/>
</dbReference>
<dbReference type="PANTHER" id="PTHR42877:SF4">
    <property type="entry name" value="FAD_NAD(P)-BINDING DOMAIN-CONTAINING PROTEIN-RELATED"/>
    <property type="match status" value="1"/>
</dbReference>
<dbReference type="PANTHER" id="PTHR42877">
    <property type="entry name" value="L-ORNITHINE N(5)-MONOOXYGENASE-RELATED"/>
    <property type="match status" value="1"/>
</dbReference>
<dbReference type="Pfam" id="PF16170">
    <property type="entry name" value="DUF4873"/>
    <property type="match status" value="1"/>
</dbReference>
<dbReference type="SUPFAM" id="SSF51905">
    <property type="entry name" value="FAD/NAD(P)-binding domain"/>
    <property type="match status" value="2"/>
</dbReference>
<sequence>MAGVSEAERRGHRKLVRFQARRAIGPIRPTSAAWDRDFDPAGKRIAVVGTDAAAAHYISRLSESAASVTVFTQAPRRVVTGVPLWTTRAKRWLRRRTGAEHPAVAWATAAIDALTSSGIRTSDGVEHPVDAIIYGTGFAIADQVGDQTLVGAGGVTIRQAWDDGMEPYLGVAVHGFPNYFFITGPDTAAQARCVVECMKLMERTASRRIEVRRSSQQVFNERAQLKPAQPHRQTGGLEAFDLSSAATEDDQTYDGAATLTLAGARFRVRVRLTGHLDPIDGNYHWQGTVFDSLPETSLTHARAATLTIGGRSAPARITEQTPWGTHSVAGVGPPPYARSGPASATT</sequence>
<feature type="chain" id="PRO_0000103748" description="Uncharacterized protein Mb0968c">
    <location>
        <begin position="1"/>
        <end position="346"/>
    </location>
</feature>
<feature type="region of interest" description="Disordered" evidence="1">
    <location>
        <begin position="321"/>
        <end position="346"/>
    </location>
</feature>
<gene>
    <name type="ordered locus">BQ2027_MB0968C</name>
</gene>
<name>Y968_MYCBO</name>